<name>CLPS_STRMK</name>
<gene>
    <name evidence="1" type="primary">clpS</name>
    <name type="ordered locus">Smlt2335</name>
</gene>
<accession>B2FQX5</accession>
<sequence>MPHESSPDSQHEHGVAVEAARPEVAPPPFYQVMLLNDDYTPMDFVVDVLQQFFSMDLDKATQVMLHVHTRGRGVCGVFTREVAETKVAQVNEYSRMNQHPLLCTMEKA</sequence>
<feature type="chain" id="PRO_1000115480" description="ATP-dependent Clp protease adapter protein ClpS">
    <location>
        <begin position="1"/>
        <end position="108"/>
    </location>
</feature>
<feature type="region of interest" description="Disordered" evidence="2">
    <location>
        <begin position="1"/>
        <end position="22"/>
    </location>
</feature>
<feature type="compositionally biased region" description="Basic and acidic residues" evidence="2">
    <location>
        <begin position="1"/>
        <end position="15"/>
    </location>
</feature>
<evidence type="ECO:0000255" key="1">
    <source>
        <dbReference type="HAMAP-Rule" id="MF_00302"/>
    </source>
</evidence>
<evidence type="ECO:0000256" key="2">
    <source>
        <dbReference type="SAM" id="MobiDB-lite"/>
    </source>
</evidence>
<organism>
    <name type="scientific">Stenotrophomonas maltophilia (strain K279a)</name>
    <dbReference type="NCBI Taxonomy" id="522373"/>
    <lineage>
        <taxon>Bacteria</taxon>
        <taxon>Pseudomonadati</taxon>
        <taxon>Pseudomonadota</taxon>
        <taxon>Gammaproteobacteria</taxon>
        <taxon>Lysobacterales</taxon>
        <taxon>Lysobacteraceae</taxon>
        <taxon>Stenotrophomonas</taxon>
        <taxon>Stenotrophomonas maltophilia group</taxon>
    </lineage>
</organism>
<proteinExistence type="inferred from homology"/>
<reference key="1">
    <citation type="journal article" date="2008" name="Genome Biol.">
        <title>The complete genome, comparative and functional analysis of Stenotrophomonas maltophilia reveals an organism heavily shielded by drug resistance determinants.</title>
        <authorList>
            <person name="Crossman L.C."/>
            <person name="Gould V.C."/>
            <person name="Dow J.M."/>
            <person name="Vernikos G.S."/>
            <person name="Okazaki A."/>
            <person name="Sebaihia M."/>
            <person name="Saunders D."/>
            <person name="Arrowsmith C."/>
            <person name="Carver T."/>
            <person name="Peters N."/>
            <person name="Adlem E."/>
            <person name="Kerhornou A."/>
            <person name="Lord A."/>
            <person name="Murphy L."/>
            <person name="Seeger K."/>
            <person name="Squares R."/>
            <person name="Rutter S."/>
            <person name="Quail M.A."/>
            <person name="Rajandream M.A."/>
            <person name="Harris D."/>
            <person name="Churcher C."/>
            <person name="Bentley S.D."/>
            <person name="Parkhill J."/>
            <person name="Thomson N.R."/>
            <person name="Avison M.B."/>
        </authorList>
    </citation>
    <scope>NUCLEOTIDE SEQUENCE [LARGE SCALE GENOMIC DNA]</scope>
    <source>
        <strain>K279a</strain>
    </source>
</reference>
<protein>
    <recommendedName>
        <fullName evidence="1">ATP-dependent Clp protease adapter protein ClpS</fullName>
    </recommendedName>
</protein>
<dbReference type="EMBL" id="AM743169">
    <property type="protein sequence ID" value="CAQ45828.1"/>
    <property type="molecule type" value="Genomic_DNA"/>
</dbReference>
<dbReference type="RefSeq" id="WP_005409592.1">
    <property type="nucleotide sequence ID" value="NC_010943.1"/>
</dbReference>
<dbReference type="SMR" id="B2FQX5"/>
<dbReference type="EnsemblBacteria" id="CAQ45828">
    <property type="protein sequence ID" value="CAQ45828"/>
    <property type="gene ID" value="Smlt2335"/>
</dbReference>
<dbReference type="KEGG" id="sml:Smlt2335"/>
<dbReference type="eggNOG" id="COG2127">
    <property type="taxonomic scope" value="Bacteria"/>
</dbReference>
<dbReference type="HOGENOM" id="CLU_134358_2_1_6"/>
<dbReference type="Proteomes" id="UP000008840">
    <property type="component" value="Chromosome"/>
</dbReference>
<dbReference type="GO" id="GO:0030163">
    <property type="term" value="P:protein catabolic process"/>
    <property type="evidence" value="ECO:0007669"/>
    <property type="project" value="InterPro"/>
</dbReference>
<dbReference type="GO" id="GO:0006508">
    <property type="term" value="P:proteolysis"/>
    <property type="evidence" value="ECO:0007669"/>
    <property type="project" value="UniProtKB-UniRule"/>
</dbReference>
<dbReference type="FunFam" id="3.30.1390.10:FF:000002">
    <property type="entry name" value="ATP-dependent Clp protease adapter protein ClpS"/>
    <property type="match status" value="1"/>
</dbReference>
<dbReference type="Gene3D" id="3.30.1390.10">
    <property type="match status" value="1"/>
</dbReference>
<dbReference type="HAMAP" id="MF_00302">
    <property type="entry name" value="ClpS"/>
    <property type="match status" value="1"/>
</dbReference>
<dbReference type="InterPro" id="IPR022935">
    <property type="entry name" value="ClpS"/>
</dbReference>
<dbReference type="InterPro" id="IPR003769">
    <property type="entry name" value="ClpS_core"/>
</dbReference>
<dbReference type="InterPro" id="IPR014719">
    <property type="entry name" value="Ribosomal_bL12_C/ClpS-like"/>
</dbReference>
<dbReference type="NCBIfam" id="NF000669">
    <property type="entry name" value="PRK00033.1-2"/>
    <property type="match status" value="1"/>
</dbReference>
<dbReference type="NCBIfam" id="NF000670">
    <property type="entry name" value="PRK00033.1-3"/>
    <property type="match status" value="1"/>
</dbReference>
<dbReference type="NCBIfam" id="NF000672">
    <property type="entry name" value="PRK00033.1-5"/>
    <property type="match status" value="1"/>
</dbReference>
<dbReference type="PANTHER" id="PTHR33473:SF19">
    <property type="entry name" value="ATP-DEPENDENT CLP PROTEASE ADAPTER PROTEIN CLPS"/>
    <property type="match status" value="1"/>
</dbReference>
<dbReference type="PANTHER" id="PTHR33473">
    <property type="entry name" value="ATP-DEPENDENT CLP PROTEASE ADAPTER PROTEIN CLPS1, CHLOROPLASTIC"/>
    <property type="match status" value="1"/>
</dbReference>
<dbReference type="Pfam" id="PF02617">
    <property type="entry name" value="ClpS"/>
    <property type="match status" value="1"/>
</dbReference>
<dbReference type="SUPFAM" id="SSF54736">
    <property type="entry name" value="ClpS-like"/>
    <property type="match status" value="1"/>
</dbReference>
<comment type="function">
    <text evidence="1">Involved in the modulation of the specificity of the ClpAP-mediated ATP-dependent protein degradation.</text>
</comment>
<comment type="subunit">
    <text evidence="1">Binds to the N-terminal domain of the chaperone ClpA.</text>
</comment>
<comment type="similarity">
    <text evidence="1">Belongs to the ClpS family.</text>
</comment>
<keyword id="KW-1185">Reference proteome</keyword>